<comment type="function">
    <text evidence="1">Specifically methylates the pseudouridine at position 1915 (m3Psi1915) in 23S rRNA.</text>
</comment>
<comment type="catalytic activity">
    <reaction evidence="1">
        <text>pseudouridine(1915) in 23S rRNA + S-adenosyl-L-methionine = N(3)-methylpseudouridine(1915) in 23S rRNA + S-adenosyl-L-homocysteine + H(+)</text>
        <dbReference type="Rhea" id="RHEA:42752"/>
        <dbReference type="Rhea" id="RHEA-COMP:10221"/>
        <dbReference type="Rhea" id="RHEA-COMP:10222"/>
        <dbReference type="ChEBI" id="CHEBI:15378"/>
        <dbReference type="ChEBI" id="CHEBI:57856"/>
        <dbReference type="ChEBI" id="CHEBI:59789"/>
        <dbReference type="ChEBI" id="CHEBI:65314"/>
        <dbReference type="ChEBI" id="CHEBI:74486"/>
        <dbReference type="EC" id="2.1.1.177"/>
    </reaction>
</comment>
<comment type="subunit">
    <text evidence="1">Homodimer.</text>
</comment>
<comment type="subcellular location">
    <subcellularLocation>
        <location evidence="1">Cytoplasm</location>
    </subcellularLocation>
</comment>
<comment type="similarity">
    <text evidence="1">Belongs to the RNA methyltransferase RlmH family.</text>
</comment>
<evidence type="ECO:0000255" key="1">
    <source>
        <dbReference type="HAMAP-Rule" id="MF_00658"/>
    </source>
</evidence>
<organism>
    <name type="scientific">Shewanella pealeana (strain ATCC 700345 / ANG-SQ1)</name>
    <dbReference type="NCBI Taxonomy" id="398579"/>
    <lineage>
        <taxon>Bacteria</taxon>
        <taxon>Pseudomonadati</taxon>
        <taxon>Pseudomonadota</taxon>
        <taxon>Gammaproteobacteria</taxon>
        <taxon>Alteromonadales</taxon>
        <taxon>Shewanellaceae</taxon>
        <taxon>Shewanella</taxon>
    </lineage>
</organism>
<keyword id="KW-0963">Cytoplasm</keyword>
<keyword id="KW-0489">Methyltransferase</keyword>
<keyword id="KW-1185">Reference proteome</keyword>
<keyword id="KW-0698">rRNA processing</keyword>
<keyword id="KW-0949">S-adenosyl-L-methionine</keyword>
<keyword id="KW-0808">Transferase</keyword>
<sequence length="156" mass="17445">MKIQLVAVGTRMPDWVETGFKEYQRRFPRDMALELVEIPAGKRGKNADIARILQKEGELMLAAIPKGNHIVSLDLPGKNLTTPQLAEQMNKWLLDGRDVSLLIGGPEGLSPECKKAAAQSWCLSALTLPHPLVRVIVAESLYRGWSINNNHPYHRE</sequence>
<gene>
    <name evidence="1" type="primary">rlmH</name>
    <name type="ordered locus">Spea_3148</name>
</gene>
<dbReference type="EC" id="2.1.1.177" evidence="1"/>
<dbReference type="EMBL" id="CP000851">
    <property type="protein sequence ID" value="ABV88464.1"/>
    <property type="molecule type" value="Genomic_DNA"/>
</dbReference>
<dbReference type="RefSeq" id="WP_012156366.1">
    <property type="nucleotide sequence ID" value="NC_009901.1"/>
</dbReference>
<dbReference type="SMR" id="A8H7C7"/>
<dbReference type="STRING" id="398579.Spea_3148"/>
<dbReference type="KEGG" id="spl:Spea_3148"/>
<dbReference type="eggNOG" id="COG1576">
    <property type="taxonomic scope" value="Bacteria"/>
</dbReference>
<dbReference type="HOGENOM" id="CLU_100552_1_0_6"/>
<dbReference type="OrthoDB" id="9806643at2"/>
<dbReference type="Proteomes" id="UP000002608">
    <property type="component" value="Chromosome"/>
</dbReference>
<dbReference type="GO" id="GO:0005737">
    <property type="term" value="C:cytoplasm"/>
    <property type="evidence" value="ECO:0007669"/>
    <property type="project" value="UniProtKB-SubCell"/>
</dbReference>
<dbReference type="GO" id="GO:0070038">
    <property type="term" value="F:rRNA (pseudouridine-N3-)-methyltransferase activity"/>
    <property type="evidence" value="ECO:0007669"/>
    <property type="project" value="UniProtKB-UniRule"/>
</dbReference>
<dbReference type="CDD" id="cd18081">
    <property type="entry name" value="RlmH-like"/>
    <property type="match status" value="1"/>
</dbReference>
<dbReference type="Gene3D" id="3.40.1280.10">
    <property type="match status" value="1"/>
</dbReference>
<dbReference type="HAMAP" id="MF_00658">
    <property type="entry name" value="23SrRNA_methyltr_H"/>
    <property type="match status" value="1"/>
</dbReference>
<dbReference type="InterPro" id="IPR029028">
    <property type="entry name" value="Alpha/beta_knot_MTases"/>
</dbReference>
<dbReference type="InterPro" id="IPR003742">
    <property type="entry name" value="RlmH-like"/>
</dbReference>
<dbReference type="InterPro" id="IPR029026">
    <property type="entry name" value="tRNA_m1G_MTases_N"/>
</dbReference>
<dbReference type="NCBIfam" id="NF000984">
    <property type="entry name" value="PRK00103.1-1"/>
    <property type="match status" value="1"/>
</dbReference>
<dbReference type="NCBIfam" id="NF000986">
    <property type="entry name" value="PRK00103.1-4"/>
    <property type="match status" value="1"/>
</dbReference>
<dbReference type="NCBIfam" id="TIGR00246">
    <property type="entry name" value="tRNA_RlmH_YbeA"/>
    <property type="match status" value="1"/>
</dbReference>
<dbReference type="PANTHER" id="PTHR33603">
    <property type="entry name" value="METHYLTRANSFERASE"/>
    <property type="match status" value="1"/>
</dbReference>
<dbReference type="PANTHER" id="PTHR33603:SF1">
    <property type="entry name" value="RIBOSOMAL RNA LARGE SUBUNIT METHYLTRANSFERASE H"/>
    <property type="match status" value="1"/>
</dbReference>
<dbReference type="Pfam" id="PF02590">
    <property type="entry name" value="SPOUT_MTase"/>
    <property type="match status" value="1"/>
</dbReference>
<dbReference type="PIRSF" id="PIRSF004505">
    <property type="entry name" value="MT_bac"/>
    <property type="match status" value="1"/>
</dbReference>
<dbReference type="SUPFAM" id="SSF75217">
    <property type="entry name" value="alpha/beta knot"/>
    <property type="match status" value="1"/>
</dbReference>
<name>RLMH_SHEPA</name>
<proteinExistence type="inferred from homology"/>
<feature type="chain" id="PRO_1000082815" description="Ribosomal RNA large subunit methyltransferase H">
    <location>
        <begin position="1"/>
        <end position="156"/>
    </location>
</feature>
<feature type="binding site" evidence="1">
    <location>
        <position position="73"/>
    </location>
    <ligand>
        <name>S-adenosyl-L-methionine</name>
        <dbReference type="ChEBI" id="CHEBI:59789"/>
    </ligand>
</feature>
<feature type="binding site" evidence="1">
    <location>
        <position position="104"/>
    </location>
    <ligand>
        <name>S-adenosyl-L-methionine</name>
        <dbReference type="ChEBI" id="CHEBI:59789"/>
    </ligand>
</feature>
<feature type="binding site" evidence="1">
    <location>
        <begin position="123"/>
        <end position="128"/>
    </location>
    <ligand>
        <name>S-adenosyl-L-methionine</name>
        <dbReference type="ChEBI" id="CHEBI:59789"/>
    </ligand>
</feature>
<protein>
    <recommendedName>
        <fullName evidence="1">Ribosomal RNA large subunit methyltransferase H</fullName>
        <ecNumber evidence="1">2.1.1.177</ecNumber>
    </recommendedName>
    <alternativeName>
        <fullName evidence="1">23S rRNA (pseudouridine1915-N3)-methyltransferase</fullName>
    </alternativeName>
    <alternativeName>
        <fullName evidence="1">23S rRNA m3Psi1915 methyltransferase</fullName>
    </alternativeName>
    <alternativeName>
        <fullName evidence="1">rRNA (pseudouridine-N3-)-methyltransferase RlmH</fullName>
    </alternativeName>
</protein>
<accession>A8H7C7</accession>
<reference key="1">
    <citation type="submission" date="2007-10" db="EMBL/GenBank/DDBJ databases">
        <title>Complete sequence of Shewanella pealeana ATCC 700345.</title>
        <authorList>
            <consortium name="US DOE Joint Genome Institute"/>
            <person name="Copeland A."/>
            <person name="Lucas S."/>
            <person name="Lapidus A."/>
            <person name="Barry K."/>
            <person name="Glavina del Rio T."/>
            <person name="Dalin E."/>
            <person name="Tice H."/>
            <person name="Pitluck S."/>
            <person name="Chertkov O."/>
            <person name="Brettin T."/>
            <person name="Bruce D."/>
            <person name="Detter J.C."/>
            <person name="Han C."/>
            <person name="Schmutz J."/>
            <person name="Larimer F."/>
            <person name="Land M."/>
            <person name="Hauser L."/>
            <person name="Kyrpides N."/>
            <person name="Kim E."/>
            <person name="Zhao J.-S.Z."/>
            <person name="Manno D."/>
            <person name="Hawari J."/>
            <person name="Richardson P."/>
        </authorList>
    </citation>
    <scope>NUCLEOTIDE SEQUENCE [LARGE SCALE GENOMIC DNA]</scope>
    <source>
        <strain>ATCC 700345 / ANG-SQ1</strain>
    </source>
</reference>